<sequence length="53" mass="6120">MAVQQNKKSRSRRDMRRSHDALTTAAVSVDARGETHLRHHVTADGYYRGRKIK</sequence>
<name>RL32_GLAP5</name>
<organism>
    <name type="scientific">Glaesserella parasuis serovar 5 (strain SH0165)</name>
    <name type="common">Haemophilus parasuis</name>
    <dbReference type="NCBI Taxonomy" id="557723"/>
    <lineage>
        <taxon>Bacteria</taxon>
        <taxon>Pseudomonadati</taxon>
        <taxon>Pseudomonadota</taxon>
        <taxon>Gammaproteobacteria</taxon>
        <taxon>Pasteurellales</taxon>
        <taxon>Pasteurellaceae</taxon>
        <taxon>Glaesserella</taxon>
    </lineage>
</organism>
<dbReference type="EMBL" id="CP001321">
    <property type="protein sequence ID" value="ACL32885.1"/>
    <property type="molecule type" value="Genomic_DNA"/>
</dbReference>
<dbReference type="RefSeq" id="WP_005711065.1">
    <property type="nucleotide sequence ID" value="NC_011852.1"/>
</dbReference>
<dbReference type="SMR" id="B8F6D3"/>
<dbReference type="STRING" id="557723.HAPS_1293"/>
<dbReference type="GeneID" id="66618254"/>
<dbReference type="KEGG" id="hap:HAPS_1293"/>
<dbReference type="HOGENOM" id="CLU_129084_2_1_6"/>
<dbReference type="Proteomes" id="UP000006743">
    <property type="component" value="Chromosome"/>
</dbReference>
<dbReference type="GO" id="GO:0015934">
    <property type="term" value="C:large ribosomal subunit"/>
    <property type="evidence" value="ECO:0007669"/>
    <property type="project" value="InterPro"/>
</dbReference>
<dbReference type="GO" id="GO:0003735">
    <property type="term" value="F:structural constituent of ribosome"/>
    <property type="evidence" value="ECO:0007669"/>
    <property type="project" value="InterPro"/>
</dbReference>
<dbReference type="GO" id="GO:0006412">
    <property type="term" value="P:translation"/>
    <property type="evidence" value="ECO:0007669"/>
    <property type="project" value="UniProtKB-UniRule"/>
</dbReference>
<dbReference type="Gene3D" id="1.20.5.640">
    <property type="entry name" value="Single helix bin"/>
    <property type="match status" value="1"/>
</dbReference>
<dbReference type="HAMAP" id="MF_00340">
    <property type="entry name" value="Ribosomal_bL32"/>
    <property type="match status" value="1"/>
</dbReference>
<dbReference type="InterPro" id="IPR002677">
    <property type="entry name" value="Ribosomal_bL32"/>
</dbReference>
<dbReference type="InterPro" id="IPR044957">
    <property type="entry name" value="Ribosomal_bL32_bact"/>
</dbReference>
<dbReference type="InterPro" id="IPR011332">
    <property type="entry name" value="Ribosomal_zn-bd"/>
</dbReference>
<dbReference type="NCBIfam" id="TIGR01031">
    <property type="entry name" value="rpmF_bact"/>
    <property type="match status" value="1"/>
</dbReference>
<dbReference type="PANTHER" id="PTHR35534">
    <property type="entry name" value="50S RIBOSOMAL PROTEIN L32"/>
    <property type="match status" value="1"/>
</dbReference>
<dbReference type="PANTHER" id="PTHR35534:SF1">
    <property type="entry name" value="LARGE RIBOSOMAL SUBUNIT PROTEIN BL32"/>
    <property type="match status" value="1"/>
</dbReference>
<dbReference type="Pfam" id="PF01783">
    <property type="entry name" value="Ribosomal_L32p"/>
    <property type="match status" value="1"/>
</dbReference>
<dbReference type="SUPFAM" id="SSF57829">
    <property type="entry name" value="Zn-binding ribosomal proteins"/>
    <property type="match status" value="1"/>
</dbReference>
<proteinExistence type="inferred from homology"/>
<protein>
    <recommendedName>
        <fullName evidence="1">Large ribosomal subunit protein bL32</fullName>
    </recommendedName>
    <alternativeName>
        <fullName evidence="3">50S ribosomal protein L32</fullName>
    </alternativeName>
</protein>
<feature type="chain" id="PRO_1000195978" description="Large ribosomal subunit protein bL32">
    <location>
        <begin position="1"/>
        <end position="53"/>
    </location>
</feature>
<feature type="region of interest" description="Disordered" evidence="2">
    <location>
        <begin position="1"/>
        <end position="27"/>
    </location>
</feature>
<feature type="compositionally biased region" description="Basic residues" evidence="2">
    <location>
        <begin position="7"/>
        <end position="16"/>
    </location>
</feature>
<accession>B8F6D3</accession>
<reference key="1">
    <citation type="journal article" date="2009" name="J. Bacteriol.">
        <title>Complete genome sequence of Haemophilus parasuis SH0165.</title>
        <authorList>
            <person name="Yue M."/>
            <person name="Yang F."/>
            <person name="Yang J."/>
            <person name="Bei W."/>
            <person name="Cai X."/>
            <person name="Chen L."/>
            <person name="Dong J."/>
            <person name="Zhou R."/>
            <person name="Jin M."/>
            <person name="Jin Q."/>
            <person name="Chen H."/>
        </authorList>
    </citation>
    <scope>NUCLEOTIDE SEQUENCE [LARGE SCALE GENOMIC DNA]</scope>
    <source>
        <strain>SH0165</strain>
    </source>
</reference>
<comment type="similarity">
    <text evidence="1">Belongs to the bacterial ribosomal protein bL32 family.</text>
</comment>
<keyword id="KW-1185">Reference proteome</keyword>
<keyword id="KW-0687">Ribonucleoprotein</keyword>
<keyword id="KW-0689">Ribosomal protein</keyword>
<gene>
    <name evidence="1" type="primary">rpmF</name>
    <name type="ordered locus">HAPS_1293</name>
</gene>
<evidence type="ECO:0000255" key="1">
    <source>
        <dbReference type="HAMAP-Rule" id="MF_00340"/>
    </source>
</evidence>
<evidence type="ECO:0000256" key="2">
    <source>
        <dbReference type="SAM" id="MobiDB-lite"/>
    </source>
</evidence>
<evidence type="ECO:0000305" key="3"/>